<protein>
    <recommendedName>
        <fullName evidence="1">3-phosphoshikimate 1-carboxyvinyltransferase</fullName>
        <ecNumber evidence="1">2.5.1.19</ecNumber>
    </recommendedName>
    <alternativeName>
        <fullName evidence="1">5-enolpyruvylshikimate-3-phosphate synthase</fullName>
        <shortName evidence="1">EPSP synthase</shortName>
        <shortName evidence="1">EPSPS</shortName>
    </alternativeName>
</protein>
<feature type="chain" id="PRO_1000012457" description="3-phosphoshikimate 1-carboxyvinyltransferase">
    <location>
        <begin position="1"/>
        <end position="431"/>
    </location>
</feature>
<feature type="active site" description="Proton acceptor" evidence="1">
    <location>
        <position position="317"/>
    </location>
</feature>
<feature type="binding site" evidence="1">
    <location>
        <position position="23"/>
    </location>
    <ligand>
        <name>3-phosphoshikimate</name>
        <dbReference type="ChEBI" id="CHEBI:145989"/>
    </ligand>
</feature>
<feature type="binding site" evidence="1">
    <location>
        <position position="23"/>
    </location>
    <ligand>
        <name>phosphoenolpyruvate</name>
        <dbReference type="ChEBI" id="CHEBI:58702"/>
    </ligand>
</feature>
<feature type="binding site" evidence="1">
    <location>
        <position position="24"/>
    </location>
    <ligand>
        <name>3-phosphoshikimate</name>
        <dbReference type="ChEBI" id="CHEBI:145989"/>
    </ligand>
</feature>
<feature type="binding site" evidence="1">
    <location>
        <position position="28"/>
    </location>
    <ligand>
        <name>3-phosphoshikimate</name>
        <dbReference type="ChEBI" id="CHEBI:145989"/>
    </ligand>
</feature>
<feature type="binding site" evidence="1">
    <location>
        <position position="96"/>
    </location>
    <ligand>
        <name>phosphoenolpyruvate</name>
        <dbReference type="ChEBI" id="CHEBI:58702"/>
    </ligand>
</feature>
<feature type="binding site" evidence="1">
    <location>
        <position position="124"/>
    </location>
    <ligand>
        <name>phosphoenolpyruvate</name>
        <dbReference type="ChEBI" id="CHEBI:58702"/>
    </ligand>
</feature>
<feature type="binding site" evidence="1">
    <location>
        <position position="169"/>
    </location>
    <ligand>
        <name>3-phosphoshikimate</name>
        <dbReference type="ChEBI" id="CHEBI:145989"/>
    </ligand>
</feature>
<feature type="binding site" evidence="1">
    <location>
        <position position="171"/>
    </location>
    <ligand>
        <name>3-phosphoshikimate</name>
        <dbReference type="ChEBI" id="CHEBI:145989"/>
    </ligand>
</feature>
<feature type="binding site" evidence="1">
    <location>
        <position position="171"/>
    </location>
    <ligand>
        <name>phosphoenolpyruvate</name>
        <dbReference type="ChEBI" id="CHEBI:58702"/>
    </ligand>
</feature>
<feature type="binding site" evidence="1">
    <location>
        <position position="317"/>
    </location>
    <ligand>
        <name>3-phosphoshikimate</name>
        <dbReference type="ChEBI" id="CHEBI:145989"/>
    </ligand>
</feature>
<feature type="binding site" evidence="1">
    <location>
        <position position="344"/>
    </location>
    <ligand>
        <name>3-phosphoshikimate</name>
        <dbReference type="ChEBI" id="CHEBI:145989"/>
    </ligand>
</feature>
<feature type="binding site" evidence="1">
    <location>
        <position position="348"/>
    </location>
    <ligand>
        <name>phosphoenolpyruvate</name>
        <dbReference type="ChEBI" id="CHEBI:58702"/>
    </ligand>
</feature>
<feature type="binding site" evidence="1">
    <location>
        <position position="390"/>
    </location>
    <ligand>
        <name>phosphoenolpyruvate</name>
        <dbReference type="ChEBI" id="CHEBI:58702"/>
    </ligand>
</feature>
<dbReference type="EC" id="2.5.1.19" evidence="1"/>
<dbReference type="EMBL" id="CP000142">
    <property type="protein sequence ID" value="ABA89126.1"/>
    <property type="molecule type" value="Genomic_DNA"/>
</dbReference>
<dbReference type="RefSeq" id="WP_011341630.1">
    <property type="nucleotide sequence ID" value="NC_007498.2"/>
</dbReference>
<dbReference type="SMR" id="Q3A3D1"/>
<dbReference type="STRING" id="338963.Pcar_1885"/>
<dbReference type="KEGG" id="pca:Pcar_1885"/>
<dbReference type="eggNOG" id="COG0128">
    <property type="taxonomic scope" value="Bacteria"/>
</dbReference>
<dbReference type="HOGENOM" id="CLU_024321_0_1_7"/>
<dbReference type="OrthoDB" id="9809920at2"/>
<dbReference type="UniPathway" id="UPA00053">
    <property type="reaction ID" value="UER00089"/>
</dbReference>
<dbReference type="Proteomes" id="UP000002534">
    <property type="component" value="Chromosome"/>
</dbReference>
<dbReference type="GO" id="GO:0005737">
    <property type="term" value="C:cytoplasm"/>
    <property type="evidence" value="ECO:0007669"/>
    <property type="project" value="UniProtKB-SubCell"/>
</dbReference>
<dbReference type="GO" id="GO:0003866">
    <property type="term" value="F:3-phosphoshikimate 1-carboxyvinyltransferase activity"/>
    <property type="evidence" value="ECO:0007669"/>
    <property type="project" value="UniProtKB-UniRule"/>
</dbReference>
<dbReference type="GO" id="GO:0008652">
    <property type="term" value="P:amino acid biosynthetic process"/>
    <property type="evidence" value="ECO:0007669"/>
    <property type="project" value="UniProtKB-KW"/>
</dbReference>
<dbReference type="GO" id="GO:0009073">
    <property type="term" value="P:aromatic amino acid family biosynthetic process"/>
    <property type="evidence" value="ECO:0007669"/>
    <property type="project" value="UniProtKB-KW"/>
</dbReference>
<dbReference type="GO" id="GO:0009423">
    <property type="term" value="P:chorismate biosynthetic process"/>
    <property type="evidence" value="ECO:0007669"/>
    <property type="project" value="UniProtKB-UniRule"/>
</dbReference>
<dbReference type="CDD" id="cd01556">
    <property type="entry name" value="EPSP_synthase"/>
    <property type="match status" value="1"/>
</dbReference>
<dbReference type="FunFam" id="3.65.10.10:FF:000005">
    <property type="entry name" value="3-phosphoshikimate 1-carboxyvinyltransferase"/>
    <property type="match status" value="1"/>
</dbReference>
<dbReference type="FunFam" id="3.65.10.10:FF:000006">
    <property type="entry name" value="3-phosphoshikimate 1-carboxyvinyltransferase"/>
    <property type="match status" value="1"/>
</dbReference>
<dbReference type="Gene3D" id="3.65.10.10">
    <property type="entry name" value="Enolpyruvate transferase domain"/>
    <property type="match status" value="2"/>
</dbReference>
<dbReference type="HAMAP" id="MF_00210">
    <property type="entry name" value="EPSP_synth"/>
    <property type="match status" value="1"/>
</dbReference>
<dbReference type="InterPro" id="IPR001986">
    <property type="entry name" value="Enolpyruvate_Tfrase_dom"/>
</dbReference>
<dbReference type="InterPro" id="IPR036968">
    <property type="entry name" value="Enolpyruvate_Tfrase_sf"/>
</dbReference>
<dbReference type="InterPro" id="IPR006264">
    <property type="entry name" value="EPSP_synthase"/>
</dbReference>
<dbReference type="InterPro" id="IPR023193">
    <property type="entry name" value="EPSP_synthase_CS"/>
</dbReference>
<dbReference type="InterPro" id="IPR013792">
    <property type="entry name" value="RNA3'P_cycl/enolpyr_Trfase_a/b"/>
</dbReference>
<dbReference type="NCBIfam" id="TIGR01356">
    <property type="entry name" value="aroA"/>
    <property type="match status" value="1"/>
</dbReference>
<dbReference type="PANTHER" id="PTHR21090">
    <property type="entry name" value="AROM/DEHYDROQUINATE SYNTHASE"/>
    <property type="match status" value="1"/>
</dbReference>
<dbReference type="PANTHER" id="PTHR21090:SF5">
    <property type="entry name" value="PENTAFUNCTIONAL AROM POLYPEPTIDE"/>
    <property type="match status" value="1"/>
</dbReference>
<dbReference type="Pfam" id="PF00275">
    <property type="entry name" value="EPSP_synthase"/>
    <property type="match status" value="1"/>
</dbReference>
<dbReference type="PIRSF" id="PIRSF000505">
    <property type="entry name" value="EPSPS"/>
    <property type="match status" value="1"/>
</dbReference>
<dbReference type="SUPFAM" id="SSF55205">
    <property type="entry name" value="EPT/RTPC-like"/>
    <property type="match status" value="1"/>
</dbReference>
<dbReference type="PROSITE" id="PS00104">
    <property type="entry name" value="EPSP_SYNTHASE_1"/>
    <property type="match status" value="1"/>
</dbReference>
<dbReference type="PROSITE" id="PS00885">
    <property type="entry name" value="EPSP_SYNTHASE_2"/>
    <property type="match status" value="1"/>
</dbReference>
<proteinExistence type="inferred from homology"/>
<name>AROA_SYNC1</name>
<keyword id="KW-0028">Amino-acid biosynthesis</keyword>
<keyword id="KW-0057">Aromatic amino acid biosynthesis</keyword>
<keyword id="KW-0963">Cytoplasm</keyword>
<keyword id="KW-1185">Reference proteome</keyword>
<keyword id="KW-0808">Transferase</keyword>
<accession>Q3A3D1</accession>
<evidence type="ECO:0000255" key="1">
    <source>
        <dbReference type="HAMAP-Rule" id="MF_00210"/>
    </source>
</evidence>
<sequence length="431" mass="45374">MSENQVIKPGGRLVGEVQVPGDKSISHRAIMLGALGEGETVVRGLLRGEDNLATLEAFRSMGVAFCEDGDGALRIAGRGLHGLQEPQDVIDCGNSGTTMRLMTGLLAGQQFFSVMTGDRFLRKRPMKRVVGPLTAMGAHILGRAGGEYAPLALQGKTLQGITHHSAVASAQVKSALLLGGLYAEGPTTVHEPHRSRDHSERMLTWFGADVRPFEGGVTLHPGSCLKGGEVIVPGDISSAAFFMVAALIVPGSELLIRQVGVNPTRSGVIDILRQMGGNIELLNERDCSGEPVADILVKASDLKGVEIGGAVIPRAIDEFPVISVAAAFAEGRTVIRDARELRVKETDRIASMCSQMGALGALVEPREDGMVITGGPSLGAAKVSSLGDHRIGMSMAVAALRASAPVTVTDTECTATSFPGFWELFNSVREH</sequence>
<organism>
    <name type="scientific">Syntrophotalea carbinolica (strain DSM 2380 / NBRC 103641 / GraBd1)</name>
    <name type="common">Pelobacter carbinolicus</name>
    <dbReference type="NCBI Taxonomy" id="338963"/>
    <lineage>
        <taxon>Bacteria</taxon>
        <taxon>Pseudomonadati</taxon>
        <taxon>Thermodesulfobacteriota</taxon>
        <taxon>Desulfuromonadia</taxon>
        <taxon>Desulfuromonadales</taxon>
        <taxon>Syntrophotaleaceae</taxon>
        <taxon>Syntrophotalea</taxon>
    </lineage>
</organism>
<comment type="function">
    <text evidence="1">Catalyzes the transfer of the enolpyruvyl moiety of phosphoenolpyruvate (PEP) to the 5-hydroxyl of shikimate-3-phosphate (S3P) to produce enolpyruvyl shikimate-3-phosphate and inorganic phosphate.</text>
</comment>
<comment type="catalytic activity">
    <reaction evidence="1">
        <text>3-phosphoshikimate + phosphoenolpyruvate = 5-O-(1-carboxyvinyl)-3-phosphoshikimate + phosphate</text>
        <dbReference type="Rhea" id="RHEA:21256"/>
        <dbReference type="ChEBI" id="CHEBI:43474"/>
        <dbReference type="ChEBI" id="CHEBI:57701"/>
        <dbReference type="ChEBI" id="CHEBI:58702"/>
        <dbReference type="ChEBI" id="CHEBI:145989"/>
        <dbReference type="EC" id="2.5.1.19"/>
    </reaction>
    <physiologicalReaction direction="left-to-right" evidence="1">
        <dbReference type="Rhea" id="RHEA:21257"/>
    </physiologicalReaction>
</comment>
<comment type="pathway">
    <text evidence="1">Metabolic intermediate biosynthesis; chorismate biosynthesis; chorismate from D-erythrose 4-phosphate and phosphoenolpyruvate: step 6/7.</text>
</comment>
<comment type="subunit">
    <text evidence="1">Monomer.</text>
</comment>
<comment type="subcellular location">
    <subcellularLocation>
        <location evidence="1">Cytoplasm</location>
    </subcellularLocation>
</comment>
<comment type="similarity">
    <text evidence="1">Belongs to the EPSP synthase family.</text>
</comment>
<gene>
    <name evidence="1" type="primary">aroA</name>
    <name type="ordered locus">Pcar_1885</name>
</gene>
<reference key="1">
    <citation type="submission" date="2005-10" db="EMBL/GenBank/DDBJ databases">
        <title>Complete sequence of Pelobacter carbinolicus DSM 2380.</title>
        <authorList>
            <person name="Copeland A."/>
            <person name="Lucas S."/>
            <person name="Lapidus A."/>
            <person name="Barry K."/>
            <person name="Detter J.C."/>
            <person name="Glavina T."/>
            <person name="Hammon N."/>
            <person name="Israni S."/>
            <person name="Pitluck S."/>
            <person name="Chertkov O."/>
            <person name="Schmutz J."/>
            <person name="Larimer F."/>
            <person name="Land M."/>
            <person name="Kyrpides N."/>
            <person name="Ivanova N."/>
            <person name="Richardson P."/>
        </authorList>
    </citation>
    <scope>NUCLEOTIDE SEQUENCE [LARGE SCALE GENOMIC DNA]</scope>
    <source>
        <strain>DSM 2380 / NBRC 103641 / GraBd1</strain>
    </source>
</reference>